<sequence>MAENLANHLLDEMIEALSSLPGIGRKSAFRISFHLLRLEQGLFNQFIHQLTDTKNKIKFCKRCGSYAETEICEICVSEKRDSHTFCVVEQPEDIFFIENTREFQGKYHVLNGVISPLEGIGPRDLRIKELLERIEPEQVKEVLIATNPTLEGDATADYLANQLKPISVNVTRIAYGITVGGSIELADQYTLGRAIRSRLQL</sequence>
<comment type="function">
    <text evidence="1">May play a role in DNA repair. It seems to be involved in an RecBC-independent recombinational process of DNA repair. It may act with RecF and RecO.</text>
</comment>
<comment type="similarity">
    <text evidence="1">Belongs to the RecR family.</text>
</comment>
<feature type="chain" id="PRO_0000190340" description="Recombination protein RecR">
    <location>
        <begin position="1"/>
        <end position="201"/>
    </location>
</feature>
<feature type="domain" description="Toprim" evidence="1">
    <location>
        <begin position="83"/>
        <end position="178"/>
    </location>
</feature>
<feature type="zinc finger region" description="C4-type" evidence="1">
    <location>
        <begin position="60"/>
        <end position="75"/>
    </location>
</feature>
<protein>
    <recommendedName>
        <fullName evidence="1">Recombination protein RecR</fullName>
    </recommendedName>
</protein>
<dbReference type="EMBL" id="AE016823">
    <property type="protein sequence ID" value="AAS72014.1"/>
    <property type="molecule type" value="Genomic_DNA"/>
</dbReference>
<dbReference type="RefSeq" id="WP_000829688.1">
    <property type="nucleotide sequence ID" value="NC_005823.1"/>
</dbReference>
<dbReference type="SMR" id="Q72LS5"/>
<dbReference type="KEGG" id="lic:LIC_13476"/>
<dbReference type="HOGENOM" id="CLU_060739_1_0_12"/>
<dbReference type="Proteomes" id="UP000007037">
    <property type="component" value="Chromosome I"/>
</dbReference>
<dbReference type="GO" id="GO:0003677">
    <property type="term" value="F:DNA binding"/>
    <property type="evidence" value="ECO:0007669"/>
    <property type="project" value="UniProtKB-UniRule"/>
</dbReference>
<dbReference type="GO" id="GO:0008270">
    <property type="term" value="F:zinc ion binding"/>
    <property type="evidence" value="ECO:0007669"/>
    <property type="project" value="UniProtKB-KW"/>
</dbReference>
<dbReference type="GO" id="GO:0006310">
    <property type="term" value="P:DNA recombination"/>
    <property type="evidence" value="ECO:0007669"/>
    <property type="project" value="UniProtKB-UniRule"/>
</dbReference>
<dbReference type="GO" id="GO:0006281">
    <property type="term" value="P:DNA repair"/>
    <property type="evidence" value="ECO:0007669"/>
    <property type="project" value="UniProtKB-UniRule"/>
</dbReference>
<dbReference type="CDD" id="cd01025">
    <property type="entry name" value="TOPRIM_recR"/>
    <property type="match status" value="1"/>
</dbReference>
<dbReference type="Gene3D" id="3.40.1360.10">
    <property type="match status" value="1"/>
</dbReference>
<dbReference type="Gene3D" id="6.10.250.240">
    <property type="match status" value="1"/>
</dbReference>
<dbReference type="Gene3D" id="1.10.8.420">
    <property type="entry name" value="RecR Domain 1"/>
    <property type="match status" value="1"/>
</dbReference>
<dbReference type="HAMAP" id="MF_00017">
    <property type="entry name" value="RecR"/>
    <property type="match status" value="1"/>
</dbReference>
<dbReference type="InterPro" id="IPR000093">
    <property type="entry name" value="DNA_Rcmb_RecR"/>
</dbReference>
<dbReference type="InterPro" id="IPR023627">
    <property type="entry name" value="Rcmb_RecR"/>
</dbReference>
<dbReference type="InterPro" id="IPR015967">
    <property type="entry name" value="Rcmb_RecR_Znf"/>
</dbReference>
<dbReference type="InterPro" id="IPR006171">
    <property type="entry name" value="TOPRIM_dom"/>
</dbReference>
<dbReference type="InterPro" id="IPR034137">
    <property type="entry name" value="TOPRIM_RecR"/>
</dbReference>
<dbReference type="NCBIfam" id="TIGR00615">
    <property type="entry name" value="recR"/>
    <property type="match status" value="1"/>
</dbReference>
<dbReference type="PANTHER" id="PTHR30446">
    <property type="entry name" value="RECOMBINATION PROTEIN RECR"/>
    <property type="match status" value="1"/>
</dbReference>
<dbReference type="PANTHER" id="PTHR30446:SF0">
    <property type="entry name" value="RECOMBINATION PROTEIN RECR"/>
    <property type="match status" value="1"/>
</dbReference>
<dbReference type="Pfam" id="PF21176">
    <property type="entry name" value="RecR_HhH"/>
    <property type="match status" value="1"/>
</dbReference>
<dbReference type="Pfam" id="PF02132">
    <property type="entry name" value="RecR_ZnF"/>
    <property type="match status" value="1"/>
</dbReference>
<dbReference type="Pfam" id="PF13662">
    <property type="entry name" value="Toprim_4"/>
    <property type="match status" value="1"/>
</dbReference>
<dbReference type="SMART" id="SM00493">
    <property type="entry name" value="TOPRIM"/>
    <property type="match status" value="1"/>
</dbReference>
<dbReference type="SUPFAM" id="SSF111304">
    <property type="entry name" value="Recombination protein RecR"/>
    <property type="match status" value="1"/>
</dbReference>
<dbReference type="PROSITE" id="PS01300">
    <property type="entry name" value="RECR"/>
    <property type="match status" value="1"/>
</dbReference>
<dbReference type="PROSITE" id="PS50880">
    <property type="entry name" value="TOPRIM"/>
    <property type="match status" value="1"/>
</dbReference>
<evidence type="ECO:0000255" key="1">
    <source>
        <dbReference type="HAMAP-Rule" id="MF_00017"/>
    </source>
</evidence>
<keyword id="KW-0227">DNA damage</keyword>
<keyword id="KW-0233">DNA recombination</keyword>
<keyword id="KW-0234">DNA repair</keyword>
<keyword id="KW-0479">Metal-binding</keyword>
<keyword id="KW-0862">Zinc</keyword>
<keyword id="KW-0863">Zinc-finger</keyword>
<proteinExistence type="inferred from homology"/>
<accession>Q72LS5</accession>
<reference key="1">
    <citation type="journal article" date="2004" name="J. Bacteriol.">
        <title>Comparative genomics of two Leptospira interrogans serovars reveals novel insights into physiology and pathogenesis.</title>
        <authorList>
            <person name="Nascimento A.L.T.O."/>
            <person name="Ko A.I."/>
            <person name="Martins E.A.L."/>
            <person name="Monteiro-Vitorello C.B."/>
            <person name="Ho P.L."/>
            <person name="Haake D.A."/>
            <person name="Verjovski-Almeida S."/>
            <person name="Hartskeerl R.A."/>
            <person name="Marques M.V."/>
            <person name="Oliveira M.C."/>
            <person name="Menck C.F.M."/>
            <person name="Leite L.C.C."/>
            <person name="Carrer H."/>
            <person name="Coutinho L.L."/>
            <person name="Degrave W.M."/>
            <person name="Dellagostin O.A."/>
            <person name="El-Dorry H."/>
            <person name="Ferro E.S."/>
            <person name="Ferro M.I.T."/>
            <person name="Furlan L.R."/>
            <person name="Gamberini M."/>
            <person name="Giglioti E.A."/>
            <person name="Goes-Neto A."/>
            <person name="Goldman G.H."/>
            <person name="Goldman M.H.S."/>
            <person name="Harakava R."/>
            <person name="Jeronimo S.M.B."/>
            <person name="Junqueira-de-Azevedo I.L.M."/>
            <person name="Kimura E.T."/>
            <person name="Kuramae E.E."/>
            <person name="Lemos E.G.M."/>
            <person name="Lemos M.V.F."/>
            <person name="Marino C.L."/>
            <person name="Nunes L.R."/>
            <person name="de Oliveira R.C."/>
            <person name="Pereira G.G."/>
            <person name="Reis M.S."/>
            <person name="Schriefer A."/>
            <person name="Siqueira W.J."/>
            <person name="Sommer P."/>
            <person name="Tsai S.M."/>
            <person name="Simpson A.J.G."/>
            <person name="Ferro J.A."/>
            <person name="Camargo L.E.A."/>
            <person name="Kitajima J.P."/>
            <person name="Setubal J.C."/>
            <person name="Van Sluys M.A."/>
        </authorList>
    </citation>
    <scope>NUCLEOTIDE SEQUENCE [LARGE SCALE GENOMIC DNA]</scope>
    <source>
        <strain>Fiocruz L1-130</strain>
    </source>
</reference>
<organism>
    <name type="scientific">Leptospira interrogans serogroup Icterohaemorrhagiae serovar copenhageni (strain Fiocruz L1-130)</name>
    <dbReference type="NCBI Taxonomy" id="267671"/>
    <lineage>
        <taxon>Bacteria</taxon>
        <taxon>Pseudomonadati</taxon>
        <taxon>Spirochaetota</taxon>
        <taxon>Spirochaetia</taxon>
        <taxon>Leptospirales</taxon>
        <taxon>Leptospiraceae</taxon>
        <taxon>Leptospira</taxon>
    </lineage>
</organism>
<gene>
    <name evidence="1" type="primary">recR</name>
    <name type="ordered locus">LIC_13476</name>
</gene>
<name>RECR_LEPIC</name>